<protein>
    <recommendedName>
        <fullName evidence="5">Trehalose-phosphatase</fullName>
        <ecNumber evidence="6">3.1.3.12</ecNumber>
    </recommendedName>
    <alternativeName>
        <fullName evidence="4">Trehalose-6-phosphate phosphatase</fullName>
    </alternativeName>
    <alternativeName>
        <fullName evidence="4">ZrTPS2</fullName>
    </alternativeName>
</protein>
<sequence>MVNSGHRRQRIINCVAQLPYKIQLGETNDEWNIVPATGSSSLYSSIEYLNSEEKAKDYEQHVLGWTGEIGRESLPSRLFNSKNRDKSENGEKGENDLHAKEEREKEEDPLYLTNDQIDGITKDLRRHGKSDDHYNVDNVHPVWLLRRDQKRWRGFAENVLWPTFHYILKFSSDSGEKENLSWYDYVRFNEAYAMKIGEIYEKGDIIWIHDYYLLLLPQLLRMKFNDQDLTIAYFHHSPWPSNEYFRVLPRRKQILDGLMGADRGWFQNEGFARHFVSSCKRLLDSTSRKSKNRLGMEQYQISAYGGDIVVDSLPIGINRVKLLEDTFTKDIAQKVLAIKDAFQGKKIIVGRDRLDSVRGVVQKLRAFETFLSMYPEWRDQVVLIQVSVPSMKGGTNQLIRLEQQVNELVTSINMQYGSLNFSPVHHYYMRIPKDVYLSLLRVADLCVIASVRDGTNTTALEYVTVKSHMSNYNCYGNPLILSEFSGTSTILKDAMIINPWDSVAVAKSINRALSLSRDEKRALEDKIWPQVPTIQKWTDQFLSTLSDIVDEAHNTTDRKMTPALNRPALLEHYRQSKRRLFLFDYDGTLTPIVQDPAAAIPSARLISILQKLASDPCNQIWIISGRDQAFLNKWLGSRLPQLGLSAEHGCFYKDVDEENWINLTEKFDMSWQEKVGSIMEEFTRRTPGSFIERKKVALTWHYRRADPELGEFYASELKKELDKICADYDLDVMEGKANIEVRPKFVNKGEIVKRLVWHHHGRRQDMLNTKKEELPISEMPDFTLCLGDDFTDEDMFNQLNDIEAVWKKQYEDEVNQWGGFGLYPCTVGSASKKTVAKAHLTDPQQVLDTLGLLVGDVSLFQSAGTVELDSRGHVKHSDSSIRSEQASARYAMKRQQSYKN</sequence>
<proteinExistence type="evidence at protein level"/>
<comment type="function">
    <text evidence="3">Phosphatase catalytic subunit of the trehalose synthase complex that catalyzes the production of trehalose from glucose-6-phosphate and UDP-alpha-D-glucose in a two step process.</text>
</comment>
<comment type="catalytic activity">
    <reaction evidence="6">
        <text>alpha,alpha-trehalose 6-phosphate + H2O = alpha,alpha-trehalose + phosphate</text>
        <dbReference type="Rhea" id="RHEA:23420"/>
        <dbReference type="ChEBI" id="CHEBI:15377"/>
        <dbReference type="ChEBI" id="CHEBI:16551"/>
        <dbReference type="ChEBI" id="CHEBI:43474"/>
        <dbReference type="ChEBI" id="CHEBI:58429"/>
        <dbReference type="EC" id="3.1.3.12"/>
    </reaction>
</comment>
<comment type="cofactor">
    <cofactor evidence="1">
        <name>Mg(2+)</name>
        <dbReference type="ChEBI" id="CHEBI:18420"/>
    </cofactor>
</comment>
<comment type="pathway">
    <text evidence="5">Carbohydrate biosynthesis.</text>
</comment>
<comment type="induction">
    <text evidence="3">Repressed by salt and thermal stress.</text>
</comment>
<comment type="similarity">
    <text evidence="5">In the C-terminal section; belongs to the trehalose phosphatase family.</text>
</comment>
<comment type="similarity">
    <text evidence="5">In the N-terminal section; belongs to the glycosyltransferase 20 family.</text>
</comment>
<name>TPS2_ZYGRO</name>
<dbReference type="EC" id="3.1.3.12" evidence="6"/>
<dbReference type="EMBL" id="AF208030">
    <property type="protein sequence ID" value="AAF80562.1"/>
    <property type="molecule type" value="mRNA"/>
</dbReference>
<dbReference type="SMR" id="Q9P4D3"/>
<dbReference type="CAZy" id="GT20">
    <property type="family name" value="Glycosyltransferase Family 20"/>
</dbReference>
<dbReference type="BRENDA" id="3.1.3.12">
    <property type="organism ID" value="6763"/>
</dbReference>
<dbReference type="GO" id="GO:0005946">
    <property type="term" value="C:alpha,alpha-trehalose-phosphate synthase complex (UDP-forming)"/>
    <property type="evidence" value="ECO:0007669"/>
    <property type="project" value="TreeGrafter"/>
</dbReference>
<dbReference type="GO" id="GO:0005829">
    <property type="term" value="C:cytosol"/>
    <property type="evidence" value="ECO:0007669"/>
    <property type="project" value="TreeGrafter"/>
</dbReference>
<dbReference type="GO" id="GO:0003825">
    <property type="term" value="F:alpha,alpha-trehalose-phosphate synthase (UDP-forming) activity"/>
    <property type="evidence" value="ECO:0007669"/>
    <property type="project" value="TreeGrafter"/>
</dbReference>
<dbReference type="GO" id="GO:0046872">
    <property type="term" value="F:metal ion binding"/>
    <property type="evidence" value="ECO:0007669"/>
    <property type="project" value="UniProtKB-KW"/>
</dbReference>
<dbReference type="GO" id="GO:0004805">
    <property type="term" value="F:trehalose-phosphatase activity"/>
    <property type="evidence" value="ECO:0000316"/>
    <property type="project" value="UniProtKB"/>
</dbReference>
<dbReference type="GO" id="GO:0034605">
    <property type="term" value="P:cellular response to heat"/>
    <property type="evidence" value="ECO:0007669"/>
    <property type="project" value="TreeGrafter"/>
</dbReference>
<dbReference type="GO" id="GO:0031505">
    <property type="term" value="P:fungal-type cell wall organization"/>
    <property type="evidence" value="ECO:0007669"/>
    <property type="project" value="TreeGrafter"/>
</dbReference>
<dbReference type="GO" id="GO:0005992">
    <property type="term" value="P:trehalose biosynthetic process"/>
    <property type="evidence" value="ECO:0000316"/>
    <property type="project" value="UniProtKB"/>
</dbReference>
<dbReference type="CDD" id="cd03788">
    <property type="entry name" value="GT20_TPS"/>
    <property type="match status" value="1"/>
</dbReference>
<dbReference type="CDD" id="cd01627">
    <property type="entry name" value="HAD_TPP"/>
    <property type="match status" value="1"/>
</dbReference>
<dbReference type="FunFam" id="3.40.50.2000:FF:000036">
    <property type="entry name" value="Alpha,alpha-trehalose-phosphate synthase subunit Tps2"/>
    <property type="match status" value="1"/>
</dbReference>
<dbReference type="Gene3D" id="3.40.50.2000">
    <property type="entry name" value="Glycogen Phosphorylase B"/>
    <property type="match status" value="2"/>
</dbReference>
<dbReference type="Gene3D" id="3.40.50.1000">
    <property type="entry name" value="HAD superfamily/HAD-like"/>
    <property type="match status" value="1"/>
</dbReference>
<dbReference type="Gene3D" id="3.30.70.1020">
    <property type="entry name" value="Trehalose-6-phosphate phosphatase related protein, domain 2"/>
    <property type="match status" value="1"/>
</dbReference>
<dbReference type="InterPro" id="IPR001830">
    <property type="entry name" value="Glyco_trans_20"/>
</dbReference>
<dbReference type="InterPro" id="IPR036412">
    <property type="entry name" value="HAD-like_sf"/>
</dbReference>
<dbReference type="InterPro" id="IPR006379">
    <property type="entry name" value="HAD-SF_hydro_IIB"/>
</dbReference>
<dbReference type="InterPro" id="IPR023214">
    <property type="entry name" value="HAD_sf"/>
</dbReference>
<dbReference type="InterPro" id="IPR003337">
    <property type="entry name" value="Trehalose_PPase"/>
</dbReference>
<dbReference type="NCBIfam" id="TIGR01484">
    <property type="entry name" value="HAD-SF-IIB"/>
    <property type="match status" value="1"/>
</dbReference>
<dbReference type="NCBIfam" id="TIGR00685">
    <property type="entry name" value="T6PP"/>
    <property type="match status" value="1"/>
</dbReference>
<dbReference type="PANTHER" id="PTHR10788">
    <property type="entry name" value="TREHALOSE-6-PHOSPHATE SYNTHASE"/>
    <property type="match status" value="1"/>
</dbReference>
<dbReference type="PANTHER" id="PTHR10788:SF123">
    <property type="entry name" value="TREHALOSE-PHOSPHATASE"/>
    <property type="match status" value="1"/>
</dbReference>
<dbReference type="Pfam" id="PF00982">
    <property type="entry name" value="Glyco_transf_20"/>
    <property type="match status" value="1"/>
</dbReference>
<dbReference type="Pfam" id="PF02358">
    <property type="entry name" value="Trehalose_PPase"/>
    <property type="match status" value="1"/>
</dbReference>
<dbReference type="SUPFAM" id="SSF56784">
    <property type="entry name" value="HAD-like"/>
    <property type="match status" value="1"/>
</dbReference>
<dbReference type="SUPFAM" id="SSF53756">
    <property type="entry name" value="UDP-Glycosyltransferase/glycogen phosphorylase"/>
    <property type="match status" value="1"/>
</dbReference>
<organism evidence="7">
    <name type="scientific">Zygosaccharomyces rouxii</name>
    <dbReference type="NCBI Taxonomy" id="4956"/>
    <lineage>
        <taxon>Eukaryota</taxon>
        <taxon>Fungi</taxon>
        <taxon>Dikarya</taxon>
        <taxon>Ascomycota</taxon>
        <taxon>Saccharomycotina</taxon>
        <taxon>Saccharomycetes</taxon>
        <taxon>Saccharomycetales</taxon>
        <taxon>Saccharomycetaceae</taxon>
        <taxon>Zygosaccharomyces</taxon>
    </lineage>
</organism>
<feature type="chain" id="PRO_0000453075" description="Trehalose-phosphatase">
    <location>
        <begin position="1"/>
        <end position="900"/>
    </location>
</feature>
<feature type="region of interest" description="Disordered" evidence="2">
    <location>
        <begin position="76"/>
        <end position="109"/>
    </location>
</feature>
<feature type="region of interest" description="Disordered" evidence="2">
    <location>
        <begin position="874"/>
        <end position="900"/>
    </location>
</feature>
<feature type="compositionally biased region" description="Basic and acidic residues" evidence="2">
    <location>
        <begin position="82"/>
        <end position="108"/>
    </location>
</feature>
<gene>
    <name evidence="4" type="primary">TPS2</name>
</gene>
<keyword id="KW-0378">Hydrolase</keyword>
<keyword id="KW-0460">Magnesium</keyword>
<keyword id="KW-0479">Metal-binding</keyword>
<reference evidence="7" key="1">
    <citation type="journal article" date="2003" name="FEMS Yeast Res.">
        <title>Cloning and characterization of genes encoding trehalose-6-phosphate synthase (TPS1) and trehalose-6-phosphate phosphatase (TPS2) from Zygosaccharomyces rouxii.</title>
        <authorList>
            <person name="Kwon H.B."/>
            <person name="Yeo E.T."/>
            <person name="Hahn S.E."/>
            <person name="Bae S.C."/>
            <person name="Kim D.Y."/>
            <person name="Byun M.O."/>
        </authorList>
    </citation>
    <scope>NUCLEOTIDE SEQUENCE [MRNA]</scope>
    <scope>FUNCTION</scope>
    <scope>CATALYTIC ACTIVITY</scope>
    <scope>INDUCTION</scope>
    <source>
        <strain evidence="7">KACC30010</strain>
    </source>
</reference>
<accession>Q9P4D3</accession>
<evidence type="ECO:0000250" key="1">
    <source>
        <dbReference type="UniProtKB" id="P31688"/>
    </source>
</evidence>
<evidence type="ECO:0000256" key="2">
    <source>
        <dbReference type="SAM" id="MobiDB-lite"/>
    </source>
</evidence>
<evidence type="ECO:0000269" key="3">
    <source>
    </source>
</evidence>
<evidence type="ECO:0000303" key="4">
    <source>
    </source>
</evidence>
<evidence type="ECO:0000305" key="5"/>
<evidence type="ECO:0000305" key="6">
    <source>
    </source>
</evidence>
<evidence type="ECO:0000312" key="7">
    <source>
        <dbReference type="EMBL" id="AAF80562.1"/>
    </source>
</evidence>